<organism>
    <name type="scientific">Lupinus angustifolius</name>
    <name type="common">Narrow-leaved blue lupine</name>
    <dbReference type="NCBI Taxonomy" id="3871"/>
    <lineage>
        <taxon>Eukaryota</taxon>
        <taxon>Viridiplantae</taxon>
        <taxon>Streptophyta</taxon>
        <taxon>Embryophyta</taxon>
        <taxon>Tracheophyta</taxon>
        <taxon>Spermatophyta</taxon>
        <taxon>Magnoliopsida</taxon>
        <taxon>eudicotyledons</taxon>
        <taxon>Gunneridae</taxon>
        <taxon>Pentapetalae</taxon>
        <taxon>rosids</taxon>
        <taxon>fabids</taxon>
        <taxon>Fabales</taxon>
        <taxon>Fabaceae</taxon>
        <taxon>Papilionoideae</taxon>
        <taxon>50 kb inversion clade</taxon>
        <taxon>genistoids sensu lato</taxon>
        <taxon>core genistoids</taxon>
        <taxon>Genisteae</taxon>
        <taxon>Lupinus</taxon>
    </lineage>
</organism>
<feature type="signal peptide" evidence="10">
    <location>
        <begin position="1"/>
        <end position="33"/>
    </location>
</feature>
<feature type="chain" id="PRO_5015097557" description="Gamma conglutin 1">
    <location>
        <begin position="34"/>
        <end position="449"/>
    </location>
</feature>
<feature type="chain" id="PRO_0000446139" description="Gamma conglutin 1 alpha subunit">
    <location>
        <begin position="34"/>
        <end position="295"/>
    </location>
</feature>
<feature type="chain" id="PRO_0000446140" description="Gamma conglutin 1 beta subunit">
    <location>
        <begin position="296"/>
        <end position="449"/>
    </location>
</feature>
<feature type="domain" description="Peptidase A1" evidence="4">
    <location>
        <begin position="60"/>
        <end position="429"/>
    </location>
</feature>
<feature type="site" description="Cleavage; partial" evidence="8 10">
    <location>
        <begin position="295"/>
        <end position="296"/>
    </location>
</feature>
<feature type="glycosylation site" description="N-linked (GlcNAc...) asparagine" evidence="3 8 21">
    <location>
        <position position="130"/>
    </location>
</feature>
<feature type="disulfide bond" evidence="8 21">
    <location>
        <begin position="88"/>
        <end position="178"/>
    </location>
</feature>
<feature type="disulfide bond" evidence="8 21">
    <location>
        <begin position="102"/>
        <end position="115"/>
    </location>
</feature>
<feature type="disulfide bond" evidence="8 21">
    <location>
        <begin position="107"/>
        <end position="133"/>
    </location>
</feature>
<feature type="disulfide bond" evidence="8 21">
    <location>
        <begin position="118"/>
        <end position="128"/>
    </location>
</feature>
<feature type="disulfide bond" description="Interchain (between alpha and beta chains, with C-440 in beta chain)" evidence="8 21">
    <location>
        <position position="222"/>
    </location>
</feature>
<feature type="disulfide bond" evidence="8 21">
    <location>
        <begin position="350"/>
        <end position="391"/>
    </location>
</feature>
<feature type="disulfide bond" description="Interchain (between alpha and beta chains, with C-222 in alpha chain)" evidence="8 21">
    <location>
        <position position="440"/>
    </location>
</feature>
<feature type="strand" evidence="22">
    <location>
        <begin position="47"/>
        <end position="53"/>
    </location>
</feature>
<feature type="turn" evidence="22">
    <location>
        <begin position="55"/>
        <end position="57"/>
    </location>
</feature>
<feature type="strand" evidence="22">
    <location>
        <begin position="60"/>
        <end position="66"/>
    </location>
</feature>
<feature type="turn" evidence="22">
    <location>
        <begin position="67"/>
        <end position="70"/>
    </location>
</feature>
<feature type="strand" evidence="22">
    <location>
        <begin position="71"/>
        <end position="78"/>
    </location>
</feature>
<feature type="strand" evidence="22">
    <location>
        <begin position="85"/>
        <end position="87"/>
    </location>
</feature>
<feature type="helix" evidence="22">
    <location>
        <begin position="105"/>
        <end position="109"/>
    </location>
</feature>
<feature type="strand" evidence="22">
    <location>
        <begin position="114"/>
        <end position="116"/>
    </location>
</feature>
<feature type="strand" evidence="22">
    <location>
        <begin position="130"/>
        <end position="138"/>
    </location>
</feature>
<feature type="turn" evidence="22">
    <location>
        <begin position="140"/>
        <end position="142"/>
    </location>
</feature>
<feature type="strand" evidence="22">
    <location>
        <begin position="145"/>
        <end position="161"/>
    </location>
</feature>
<feature type="strand" evidence="22">
    <location>
        <begin position="164"/>
        <end position="179"/>
    </location>
</feature>
<feature type="helix" evidence="22">
    <location>
        <begin position="181"/>
        <end position="184"/>
    </location>
</feature>
<feature type="strand" evidence="22">
    <location>
        <begin position="185"/>
        <end position="188"/>
    </location>
</feature>
<feature type="strand" evidence="22">
    <location>
        <begin position="194"/>
        <end position="197"/>
    </location>
</feature>
<feature type="strand" evidence="22">
    <location>
        <begin position="199"/>
        <end position="201"/>
    </location>
</feature>
<feature type="helix" evidence="22">
    <location>
        <begin position="205"/>
        <end position="213"/>
    </location>
</feature>
<feature type="strand" evidence="22">
    <location>
        <begin position="217"/>
        <end position="222"/>
    </location>
</feature>
<feature type="strand" evidence="22">
    <location>
        <begin position="231"/>
        <end position="236"/>
    </location>
</feature>
<feature type="helix" evidence="22">
    <location>
        <begin position="241"/>
        <end position="243"/>
    </location>
</feature>
<feature type="helix" evidence="22">
    <location>
        <begin position="244"/>
        <end position="247"/>
    </location>
</feature>
<feature type="helix" evidence="22">
    <location>
        <begin position="248"/>
        <end position="250"/>
    </location>
</feature>
<feature type="helix" evidence="22">
    <location>
        <begin position="251"/>
        <end position="255"/>
    </location>
</feature>
<feature type="strand" evidence="22">
    <location>
        <begin position="258"/>
        <end position="261"/>
    </location>
</feature>
<feature type="strand" evidence="22">
    <location>
        <begin position="270"/>
        <end position="272"/>
    </location>
</feature>
<feature type="strand" evidence="22">
    <location>
        <begin position="274"/>
        <end position="279"/>
    </location>
</feature>
<feature type="strand" evidence="22">
    <location>
        <begin position="282"/>
        <end position="285"/>
    </location>
</feature>
<feature type="strand" evidence="22">
    <location>
        <begin position="307"/>
        <end position="310"/>
    </location>
</feature>
<feature type="strand" evidence="22">
    <location>
        <begin position="312"/>
        <end position="319"/>
    </location>
</feature>
<feature type="helix" evidence="22">
    <location>
        <begin position="321"/>
        <end position="333"/>
    </location>
</feature>
<feature type="strand" evidence="22">
    <location>
        <begin position="339"/>
        <end position="341"/>
    </location>
</feature>
<feature type="strand" evidence="22">
    <location>
        <begin position="350"/>
        <end position="352"/>
    </location>
</feature>
<feature type="helix" evidence="22">
    <location>
        <begin position="355"/>
        <end position="358"/>
    </location>
</feature>
<feature type="strand" evidence="22">
    <location>
        <begin position="363"/>
        <end position="367"/>
    </location>
</feature>
<feature type="helix" evidence="22">
    <location>
        <begin position="368"/>
        <end position="370"/>
    </location>
</feature>
<feature type="strand" evidence="22">
    <location>
        <begin position="373"/>
        <end position="376"/>
    </location>
</feature>
<feature type="helix" evidence="22">
    <location>
        <begin position="378"/>
        <end position="381"/>
    </location>
</feature>
<feature type="strand" evidence="22">
    <location>
        <begin position="382"/>
        <end position="386"/>
    </location>
</feature>
<feature type="strand" evidence="22">
    <location>
        <begin position="389"/>
        <end position="392"/>
    </location>
</feature>
<feature type="strand" evidence="22">
    <location>
        <begin position="394"/>
        <end position="396"/>
    </location>
</feature>
<feature type="strand" evidence="22">
    <location>
        <begin position="402"/>
        <end position="407"/>
    </location>
</feature>
<feature type="helix" evidence="22">
    <location>
        <begin position="409"/>
        <end position="412"/>
    </location>
</feature>
<feature type="strand" evidence="22">
    <location>
        <begin position="417"/>
        <end position="420"/>
    </location>
</feature>
<feature type="turn" evidence="22">
    <location>
        <begin position="421"/>
        <end position="424"/>
    </location>
</feature>
<feature type="strand" evidence="22">
    <location>
        <begin position="425"/>
        <end position="428"/>
    </location>
</feature>
<feature type="helix" evidence="22">
    <location>
        <begin position="433"/>
        <end position="436"/>
    </location>
</feature>
<feature type="turn" evidence="22">
    <location>
        <begin position="440"/>
        <end position="442"/>
    </location>
</feature>
<gene>
    <name evidence="20" type="ordered locus">LOC109345795</name>
    <name evidence="20" type="ORF">TanjilG_29300</name>
</gene>
<proteinExistence type="evidence at protein level"/>
<reference key="1">
    <citation type="journal article" date="1993" name="Plant Mol. Biol.">
        <title>Structure of the cDNA coding for conglutin gamma, a sulphur-rich protein from Lupinus angustifolius.</title>
        <authorList>
            <person name="Kolivas S."/>
            <person name="Gayler K.R."/>
        </authorList>
    </citation>
    <scope>NUCLEOTIDE SEQUENCE [MRNA]</scope>
    <source>
        <strain>cv. Unicrop</strain>
        <tissue>Cotyledon</tissue>
    </source>
</reference>
<reference key="2">
    <citation type="online journal article" date="1995" name="Plant Gene Register">
        <title>Isolation of the conglutin gamma gene from Lupinus angustifolius L.</title>
        <authorList>
            <person name="Ilgoutz S.C."/>
            <person name="Gayler K.R."/>
        </authorList>
        <locator>PGR95-024</locator>
    </citation>
    <scope>NUCLEOTIDE SEQUENCE [GENOMIC DNA]</scope>
    <scope>TISSUE SPECIFICITY</scope>
    <scope>INDUCTION BY SULFUR DEFICIENCY</scope>
</reference>
<reference key="3">
    <citation type="journal article" date="2011" name="BMC Plant Biol.">
        <title>Identification and characterisation of seed storage protein transcripts from Lupinus angustifolius.</title>
        <authorList>
            <person name="Foley R.C."/>
            <person name="Gao L.-L."/>
            <person name="Spriggs A."/>
            <person name="Soo L.Y.C."/>
            <person name="Goggin D.E."/>
            <person name="Smith P.M.C."/>
            <person name="Atkins C.A."/>
            <person name="Singh K.B."/>
        </authorList>
    </citation>
    <scope>NUCLEOTIDE SEQUENCE [MRNA]</scope>
    <scope>DEVELOPMENTAL STAGE</scope>
    <scope>ALLERGEN</scope>
    <source>
        <strain>cv. Tanjil</strain>
        <tissue>Seed</tissue>
    </source>
</reference>
<reference key="4">
    <citation type="journal article" date="2017" name="Plant Biotechnol. J.">
        <title>A comprehensive draft genome sequence for lupin (Lupinus angustifolius), an emerging health food: insights into plant-microbe interactions and legume evolution.</title>
        <authorList>
            <person name="Hane J.K."/>
            <person name="Ming Y."/>
            <person name="Kamphuis L.G."/>
            <person name="Nelson M.N."/>
            <person name="Garg G."/>
            <person name="Atkins C.A."/>
            <person name="Bayer P.E."/>
            <person name="Bravo A."/>
            <person name="Bringans S."/>
            <person name="Cannon S."/>
            <person name="Edwards D."/>
            <person name="Foley R."/>
            <person name="Gao L.L."/>
            <person name="Harrison M.J."/>
            <person name="Huang W."/>
            <person name="Hurgobin B."/>
            <person name="Li S."/>
            <person name="Liu C.W."/>
            <person name="McGrath A."/>
            <person name="Morahan G."/>
            <person name="Murray J."/>
            <person name="Weller J."/>
            <person name="Jian J."/>
            <person name="Singh K.B."/>
        </authorList>
    </citation>
    <scope>NUCLEOTIDE SEQUENCE [LARGE SCALE GENOMIC DNA]</scope>
    <source>
        <strain>cv. Tanjil</strain>
        <tissue>Seedling</tissue>
    </source>
</reference>
<reference key="5">
    <citation type="journal article" date="2018" name="J. Sci. Food Agric.">
        <title>Post-translational cleavage pattern of Lupinus angustifolius gamma-conglutin.</title>
        <authorList>
            <person name="Czubinski J."/>
            <person name="Montowska M."/>
            <person name="Fornal E."/>
        </authorList>
    </citation>
    <scope>PROTEIN SEQUENCE OF 34-36 AND 296-298</scope>
    <scope>PROTEOLYTIC CLEAVAGE</scope>
    <scope>N-TERMINUS PROTEIN SEQUENCING</scope>
    <scope>IDENTIFICATION BY MASS SPECTROMETRY</scope>
    <scope>PTM</scope>
    <scope>SUBUNIT</scope>
    <scope>DISULFIDE BOND</scope>
    <scope>GLYCOSYLATION</scope>
    <source>
        <strain>cv. Zeus</strain>
        <tissue>Seed</tissue>
    </source>
</reference>
<reference key="6">
    <citation type="journal article" date="1997" name="Plant Mol. Biol.">
        <title>Transcription of genes for conglutin gamma and a leginsulin-like protein in narrow-leafed lupin.</title>
        <authorList>
            <person name="Ilgoutz S.C."/>
            <person name="Knittel N."/>
            <person name="Lin J.M."/>
            <person name="Sterle S."/>
            <person name="Gayler K.R."/>
        </authorList>
    </citation>
    <scope>TISSUE SPECIFICITY</scope>
    <scope>DEVELOPMENTAL STAGE</scope>
    <source>
        <strain>cv. Unicrop</strain>
    </source>
</reference>
<reference key="7">
    <citation type="journal article" date="2012" name="J. Agric. Food Chem.">
        <title>Release of flavonoids from lupin globulin proteins during digestion in a model system.</title>
        <authorList>
            <person name="Czubinski J."/>
            <person name="Dwiecki K."/>
            <person name="Siger A."/>
            <person name="Kachlicki P."/>
            <person name="Neunert G."/>
            <person name="Lampart-Szczapa E."/>
            <person name="Nogala-Kalucka M."/>
        </authorList>
    </citation>
    <scope>SUBUNIT</scope>
    <scope>GLYCOSYLATION</scope>
    <source>
        <strain>cv. Zeus</strain>
    </source>
</reference>
<reference key="8">
    <citation type="journal article" date="2014" name="Food Chem.">
        <title>Characterisation of different digestion susceptibility of lupin seed globulins.</title>
        <authorList>
            <person name="Czubinski J."/>
            <person name="Dwiecki K."/>
            <person name="Siger A."/>
            <person name="Neunert G."/>
            <person name="Lampart-Szczapa E."/>
        </authorList>
    </citation>
    <scope>SUBUNIT</scope>
    <source>
        <strain>cv. Zeus</strain>
    </source>
</reference>
<reference key="9">
    <citation type="journal article" date="2017" name="J. Chromatogr. B">
        <title>Reverse phase HPLC method for detection and quantification of lupin seed gamma-conglutin.</title>
        <authorList>
            <person name="Mane S."/>
            <person name="Bringans S."/>
            <person name="Johnson S."/>
            <person name="Pareek V."/>
            <person name="Utikar R."/>
        </authorList>
    </citation>
    <scope>IDENTIFICATION BY MASS SPECTROMETRY</scope>
    <scope>TISSUE SPECIFICITY</scope>
    <source>
        <strain>cv. Coromup</strain>
    </source>
</reference>
<reference key="10">
    <citation type="journal article" date="2015" name="Acta Crystallogr. D">
        <title>Structure of gamma-conglutin: insight into the quaternary structure of 7S basic globulins from legumes.</title>
        <authorList>
            <person name="Czubinski J."/>
            <person name="Barciszewski J."/>
            <person name="Gilski M."/>
            <person name="Szpotkowski K."/>
            <person name="Debski J."/>
            <person name="Lampart-Szczapa E."/>
            <person name="Jaskolski M."/>
        </authorList>
    </citation>
    <scope>X-RAY CRYSTALLOGRAPHY (2.01 ANGSTROMS) OF 33-449</scope>
    <scope>PROTEIN SEQUENCE OF 296-301</scope>
    <scope>GLYCOSYLATION AT ASN-130</scope>
    <scope>DISULFIDE BONDS</scope>
    <scope>SUBUNIT</scope>
    <scope>BIOTECHNOLOGY</scope>
    <scope>PROTEOLYTIC CLEAVAGE</scope>
    <scope>IDENTIFICATION BY MASS SPECTROMETRY</scope>
    <source>
        <strain>cv. Zeus</strain>
        <tissue>Seed</tissue>
    </source>
</reference>
<dbReference type="EMBL" id="X65601">
    <property type="protein sequence ID" value="CAA46552.1"/>
    <property type="molecule type" value="mRNA"/>
</dbReference>
<dbReference type="EMBL" id="L39786">
    <property type="protein sequence ID" value="AAB53771.1"/>
    <property type="molecule type" value="Genomic_DNA"/>
</dbReference>
<dbReference type="EMBL" id="HQ670416">
    <property type="protein sequence ID" value="AEB33719.1"/>
    <property type="molecule type" value="mRNA"/>
</dbReference>
<dbReference type="EMBL" id="KV861538">
    <property type="protein sequence ID" value="OIW13559.1"/>
    <property type="status" value="ALT_INIT"/>
    <property type="molecule type" value="Genomic_DNA"/>
</dbReference>
<dbReference type="EMBL" id="CM007364">
    <property type="status" value="NOT_ANNOTATED_CDS"/>
    <property type="molecule type" value="Genomic_DNA"/>
</dbReference>
<dbReference type="PIR" id="S21426">
    <property type="entry name" value="S21426"/>
</dbReference>
<dbReference type="RefSeq" id="NP_001413055.1">
    <property type="nucleotide sequence ID" value="NM_001426126.1"/>
</dbReference>
<dbReference type="RefSeq" id="XP_019440547.1">
    <property type="nucleotide sequence ID" value="XM_019585002.1"/>
</dbReference>
<dbReference type="PDB" id="4PPH">
    <property type="method" value="X-ray"/>
    <property type="resolution" value="2.01 A"/>
    <property type="chains" value="A/B/C/D/E/F=33-449"/>
</dbReference>
<dbReference type="PDBsum" id="4PPH"/>
<dbReference type="SMR" id="Q42369"/>
<dbReference type="STRING" id="3871.Q42369"/>
<dbReference type="Allergome" id="7699">
    <property type="allergen name" value="Lup an gamma_Conglutin"/>
</dbReference>
<dbReference type="iPTMnet" id="Q42369"/>
<dbReference type="GeneID" id="109345795"/>
<dbReference type="KEGG" id="lang:109345795"/>
<dbReference type="OrthoDB" id="1258937at2759"/>
<dbReference type="EvolutionaryTrace" id="Q42369"/>
<dbReference type="Proteomes" id="UP000188354">
    <property type="component" value="Chromosome LG04"/>
</dbReference>
<dbReference type="GO" id="GO:0005576">
    <property type="term" value="C:extracellular region"/>
    <property type="evidence" value="ECO:0007669"/>
    <property type="project" value="UniProtKB-SubCell"/>
</dbReference>
<dbReference type="GO" id="GO:0004190">
    <property type="term" value="F:aspartic-type endopeptidase activity"/>
    <property type="evidence" value="ECO:0007669"/>
    <property type="project" value="InterPro"/>
</dbReference>
<dbReference type="GO" id="GO:0006508">
    <property type="term" value="P:proteolysis"/>
    <property type="evidence" value="ECO:0007669"/>
    <property type="project" value="InterPro"/>
</dbReference>
<dbReference type="CDD" id="cd05489">
    <property type="entry name" value="xylanase_inhibitor_I_like"/>
    <property type="match status" value="1"/>
</dbReference>
<dbReference type="FunFam" id="2.40.70.10:FF:000045">
    <property type="entry name" value="Basic 7S globulin"/>
    <property type="match status" value="1"/>
</dbReference>
<dbReference type="FunFam" id="2.40.70.10:FF:000126">
    <property type="entry name" value="Gamma conglutin 1"/>
    <property type="match status" value="1"/>
</dbReference>
<dbReference type="Gene3D" id="2.40.70.10">
    <property type="entry name" value="Acid Proteases"/>
    <property type="match status" value="2"/>
</dbReference>
<dbReference type="InterPro" id="IPR001461">
    <property type="entry name" value="Aspartic_peptidase_A1"/>
</dbReference>
<dbReference type="InterPro" id="IPR033121">
    <property type="entry name" value="PEPTIDASE_A1"/>
</dbReference>
<dbReference type="InterPro" id="IPR021109">
    <property type="entry name" value="Peptidase_aspartic_dom_sf"/>
</dbReference>
<dbReference type="InterPro" id="IPR032799">
    <property type="entry name" value="TAXi_C"/>
</dbReference>
<dbReference type="InterPro" id="IPR032861">
    <property type="entry name" value="TAXi_N"/>
</dbReference>
<dbReference type="InterPro" id="IPR033868">
    <property type="entry name" value="Xylanase_inhibitor_I-like"/>
</dbReference>
<dbReference type="PANTHER" id="PTHR47965">
    <property type="entry name" value="ASPARTYL PROTEASE-RELATED"/>
    <property type="match status" value="1"/>
</dbReference>
<dbReference type="PANTHER" id="PTHR47965:SF28">
    <property type="entry name" value="BASIC 7S GLOBULIN"/>
    <property type="match status" value="1"/>
</dbReference>
<dbReference type="Pfam" id="PF14541">
    <property type="entry name" value="TAXi_C"/>
    <property type="match status" value="1"/>
</dbReference>
<dbReference type="Pfam" id="PF14543">
    <property type="entry name" value="TAXi_N"/>
    <property type="match status" value="1"/>
</dbReference>
<dbReference type="SUPFAM" id="SSF50630">
    <property type="entry name" value="Acid proteases"/>
    <property type="match status" value="1"/>
</dbReference>
<dbReference type="PROSITE" id="PS51767">
    <property type="entry name" value="PEPTIDASE_A1"/>
    <property type="match status" value="1"/>
</dbReference>
<comment type="function">
    <text evidence="2">Sulfur-rich seed storage protein that remains undegraded at germination.</text>
</comment>
<comment type="subunit">
    <text evidence="6 7 8 10">Two-subunit monomeric unit made of alpha and beta subunits coupled by disulfide bonds (at pH 4.5 and under non-reducing conditions) (PubMed:22264085, PubMed:25664733, PubMed:29635768). Can also form oligomers including dimer, tetramer and cyclic hexamer (trimer of dimers) (at pH &gt; 5.5) (PubMed:22264085, PubMed:25664733). Component of globulins complexes which accumulate in seeds (PubMed:22264085). Interacts with flavonoids (e.g. apigenin glucosides) present in globulins complexes (PubMed:22264085, PubMed:24054261). Forms a static complex with vitexin (PubMed:24054261).</text>
</comment>
<comment type="subcellular location">
    <subcellularLocation>
        <location evidence="1">Secreted</location>
        <location evidence="1">Extracellular space</location>
    </subcellularLocation>
</comment>
<comment type="tissue specificity">
    <text evidence="9 11 12">Expressed in developing cotyledons and in the embryonic axis of germinating seeds (PubMed:9247543). Accumulates in seeds, especially in the protein bodies of developing cotyledonary cells (at protein level) (PubMed:28863333, Ref.2). Also detected, at low levels, in plumules and radicles (PubMed:9247543).</text>
</comment>
<comment type="developmental stage">
    <text evidence="5 11">Accumulates during seed development (PubMed:21457583, PubMed:9247543). In seeds, localized to the embryo tissues and to a layer of cells adjacent to the seed coat (PubMed:9247543).</text>
</comment>
<comment type="induction">
    <text evidence="12">By sulfur deficiency.</text>
</comment>
<comment type="PTM">
    <text evidence="8 10">Undergoes very complex post-translational maturation; the proteolytic processing leading to the formation of two alpha and beta subunits is incomplete, leaving a certain amount of the protein in an uncut form.</text>
</comment>
<comment type="PTM">
    <text evidence="6 10">Glycosylated on alpha chain.</text>
</comment>
<comment type="allergen">
    <text evidence="18">Causes an allergic reaction in human.</text>
</comment>
<comment type="biotechnology">
    <text evidence="19">May be used in antidiabetic therapies and diets for type 2 diabetes (T2D).</text>
</comment>
<comment type="miscellaneous">
    <text evidence="19">Capable of reducing glycaemia in mammals.</text>
</comment>
<comment type="miscellaneous">
    <text evidence="6 7">Resistant to pancreatin-mediated digestion.</text>
</comment>
<comment type="similarity">
    <text evidence="4">Belongs to the peptidase A1 family.</text>
</comment>
<comment type="sequence caution" evidence="17">
    <conflict type="erroneous initiation">
        <sequence resource="EMBL-CDS" id="OIW13559"/>
    </conflict>
    <text>Truncated N-terminus.</text>
</comment>
<evidence type="ECO:0000250" key="1">
    <source>
        <dbReference type="UniProtKB" id="Q9FEX1"/>
    </source>
</evidence>
<evidence type="ECO:0000250" key="2">
    <source>
        <dbReference type="UniProtKB" id="Q9FSH9"/>
    </source>
</evidence>
<evidence type="ECO:0000255" key="3">
    <source>
        <dbReference type="PROSITE-ProRule" id="PRU00498"/>
    </source>
</evidence>
<evidence type="ECO:0000255" key="4">
    <source>
        <dbReference type="PROSITE-ProRule" id="PRU01103"/>
    </source>
</evidence>
<evidence type="ECO:0000269" key="5">
    <source>
    </source>
</evidence>
<evidence type="ECO:0000269" key="6">
    <source>
    </source>
</evidence>
<evidence type="ECO:0000269" key="7">
    <source>
    </source>
</evidence>
<evidence type="ECO:0000269" key="8">
    <source>
    </source>
</evidence>
<evidence type="ECO:0000269" key="9">
    <source>
    </source>
</evidence>
<evidence type="ECO:0000269" key="10">
    <source>
    </source>
</evidence>
<evidence type="ECO:0000269" key="11">
    <source>
    </source>
</evidence>
<evidence type="ECO:0000269" key="12">
    <source ref="2"/>
</evidence>
<evidence type="ECO:0000303" key="13">
    <source>
    </source>
</evidence>
<evidence type="ECO:0000303" key="14">
    <source>
    </source>
</evidence>
<evidence type="ECO:0000303" key="15">
    <source>
    </source>
</evidence>
<evidence type="ECO:0000303" key="16">
    <source>
    </source>
</evidence>
<evidence type="ECO:0000305" key="17"/>
<evidence type="ECO:0000305" key="18">
    <source>
    </source>
</evidence>
<evidence type="ECO:0000305" key="19">
    <source>
    </source>
</evidence>
<evidence type="ECO:0000312" key="20">
    <source>
        <dbReference type="EMBL" id="OIW13559.1"/>
    </source>
</evidence>
<evidence type="ECO:0007744" key="21">
    <source>
        <dbReference type="PDB" id="4PPH"/>
    </source>
</evidence>
<evidence type="ECO:0007829" key="22">
    <source>
        <dbReference type="PDB" id="4PPH"/>
    </source>
</evidence>
<keyword id="KW-0002">3D-structure</keyword>
<keyword id="KW-0020">Allergen</keyword>
<keyword id="KW-0903">Direct protein sequencing</keyword>
<keyword id="KW-1015">Disulfide bond</keyword>
<keyword id="KW-0325">Glycoprotein</keyword>
<keyword id="KW-1185">Reference proteome</keyword>
<keyword id="KW-0964">Secreted</keyword>
<keyword id="KW-0732">Signal</keyword>
<accession>Q42369</accession>
<accession>A0A1J7HL10</accession>
<protein>
    <recommendedName>
        <fullName evidence="13">Gamma conglutin 1</fullName>
    </recommendedName>
    <alternativeName>
        <fullName evidence="15 16">Conglutin gamma</fullName>
    </alternativeName>
    <allergenName evidence="17">Lup an gamma-conglutin</allergenName>
    <component>
        <recommendedName>
            <fullName evidence="14">Gamma conglutin 1 beta subunit</fullName>
        </recommendedName>
        <alternativeName>
            <fullName evidence="17">Gamma conglutin 1 small subunit</fullName>
        </alternativeName>
    </component>
    <component>
        <recommendedName>
            <fullName evidence="14">Gamma conglutin 1 alpha subunit</fullName>
        </recommendedName>
        <alternativeName>
            <fullName evidence="17">Gamma conglutin 1 large subunit</fullName>
        </alternativeName>
    </component>
</protein>
<name>CONG1_LUPAN</name>
<sequence>MARNMAHILHILVISLSYSFLFVSSSSQDSQSLYHNSQPTSSKPNLLVLPVQEDASTGLHWANIHKRTPLMQVPLLLDLNGKHLWVTCSQHYSSSTYQAPFCHSTQCSRANTHQCFTCTDSTTTRPGCHNNTCGLLSSNPVTQESGLGELAQDVLAIHSTHGSKLGPMVKVPQFLFSCAPSFLAQKGLPNNVQGALGLGQAPISLQNQLFSHFGLKRQFSVCLSRYSTSNGAILFGDINDPNNNNYIHNSLDVLHDLVYTPLTISKQGEYFIQVNAIRVNKHLVIPTKNPFISPSSTSYHGSGEIGGALITTTHPYTVLSHSIFEVFTQVFANNMPKQAQVKAVGPFGLCYDSRKISGGAPSVDLILDKNDAVWRISSENFMVQAQDGVSCLGFVDGGVHARAGIALGAHHLEENLVVFDLERSRVGFNSNSLKSYGKTCSNLFDLNNP</sequence>